<keyword id="KW-0004">4Fe-4S</keyword>
<keyword id="KW-0997">Cell inner membrane</keyword>
<keyword id="KW-1003">Cell membrane</keyword>
<keyword id="KW-0249">Electron transport</keyword>
<keyword id="KW-0408">Iron</keyword>
<keyword id="KW-0411">Iron-sulfur</keyword>
<keyword id="KW-0472">Membrane</keyword>
<keyword id="KW-0479">Metal-binding</keyword>
<keyword id="KW-1185">Reference proteome</keyword>
<keyword id="KW-0677">Repeat</keyword>
<keyword id="KW-1278">Translocase</keyword>
<keyword id="KW-0813">Transport</keyword>
<reference key="1">
    <citation type="journal article" date="2008" name="J. Bacteriol.">
        <title>The pangenome structure of Escherichia coli: comparative genomic analysis of E. coli commensal and pathogenic isolates.</title>
        <authorList>
            <person name="Rasko D.A."/>
            <person name="Rosovitz M.J."/>
            <person name="Myers G.S.A."/>
            <person name="Mongodin E.F."/>
            <person name="Fricke W.F."/>
            <person name="Gajer P."/>
            <person name="Crabtree J."/>
            <person name="Sebaihia M."/>
            <person name="Thomson N.R."/>
            <person name="Chaudhuri R."/>
            <person name="Henderson I.R."/>
            <person name="Sperandio V."/>
            <person name="Ravel J."/>
        </authorList>
    </citation>
    <scope>NUCLEOTIDE SEQUENCE [LARGE SCALE GENOMIC DNA]</scope>
    <source>
        <strain>E24377A / ETEC</strain>
    </source>
</reference>
<evidence type="ECO:0000255" key="1">
    <source>
        <dbReference type="HAMAP-Rule" id="MF_00463"/>
    </source>
</evidence>
<gene>
    <name evidence="1" type="primary">rsxB</name>
    <name type="synonym">rnfB</name>
    <name type="ordered locus">EcE24377A_1836</name>
</gene>
<sequence>MNAIWIAVAAVSLLGLAFGAILGYASRRFAVEDDPVVEKIDEILPQSQCGQCGYPGCRPYAEAISCNGEKINRCAPGGEAVMLKIAELLNVEPQPLDGEAQELTPARMVAVIDENNCIGCTKCIQACPVDAIVGATRAMHTVMSDLCTGCNLCVDPCPTHCISLQPVAETPDSWKWDLNTIPVRIIPVEHHA</sequence>
<protein>
    <recommendedName>
        <fullName evidence="1">Ion-translocating oxidoreductase complex subunit B</fullName>
        <ecNumber evidence="1">7.-.-.-</ecNumber>
    </recommendedName>
    <alternativeName>
        <fullName evidence="1">Rsx electron transport complex subunit B</fullName>
    </alternativeName>
</protein>
<name>RSXB_ECO24</name>
<organism>
    <name type="scientific">Escherichia coli O139:H28 (strain E24377A / ETEC)</name>
    <dbReference type="NCBI Taxonomy" id="331111"/>
    <lineage>
        <taxon>Bacteria</taxon>
        <taxon>Pseudomonadati</taxon>
        <taxon>Pseudomonadota</taxon>
        <taxon>Gammaproteobacteria</taxon>
        <taxon>Enterobacterales</taxon>
        <taxon>Enterobacteriaceae</taxon>
        <taxon>Escherichia</taxon>
    </lineage>
</organism>
<comment type="function">
    <text evidence="1">Part of a membrane-bound complex that couples electron transfer with translocation of ions across the membrane. Required to maintain the reduced state of SoxR.</text>
</comment>
<comment type="cofactor">
    <cofactor evidence="1">
        <name>[4Fe-4S] cluster</name>
        <dbReference type="ChEBI" id="CHEBI:49883"/>
    </cofactor>
    <text evidence="1">Binds 3 [4Fe-4S] clusters.</text>
</comment>
<comment type="subunit">
    <text evidence="1">The complex is composed of six subunits: RsxA, RsxB, RsxC, RsxD, RsxE and RsxG.</text>
</comment>
<comment type="subcellular location">
    <subcellularLocation>
        <location evidence="1">Cell inner membrane</location>
    </subcellularLocation>
</comment>
<comment type="similarity">
    <text evidence="1">Belongs to the 4Fe4S bacterial-type ferredoxin family. RnfB subfamily.</text>
</comment>
<dbReference type="EC" id="7.-.-.-" evidence="1"/>
<dbReference type="EMBL" id="CP000800">
    <property type="protein sequence ID" value="ABV19193.1"/>
    <property type="molecule type" value="Genomic_DNA"/>
</dbReference>
<dbReference type="RefSeq" id="WP_000991809.1">
    <property type="nucleotide sequence ID" value="NC_009801.1"/>
</dbReference>
<dbReference type="GeneID" id="93775780"/>
<dbReference type="KEGG" id="ecw:EcE24377A_1836"/>
<dbReference type="HOGENOM" id="CLU_063448_2_0_6"/>
<dbReference type="Proteomes" id="UP000001122">
    <property type="component" value="Chromosome"/>
</dbReference>
<dbReference type="GO" id="GO:0005886">
    <property type="term" value="C:plasma membrane"/>
    <property type="evidence" value="ECO:0007669"/>
    <property type="project" value="UniProtKB-SubCell"/>
</dbReference>
<dbReference type="GO" id="GO:0051539">
    <property type="term" value="F:4 iron, 4 sulfur cluster binding"/>
    <property type="evidence" value="ECO:0007669"/>
    <property type="project" value="UniProtKB-UniRule"/>
</dbReference>
<dbReference type="GO" id="GO:0009055">
    <property type="term" value="F:electron transfer activity"/>
    <property type="evidence" value="ECO:0007669"/>
    <property type="project" value="InterPro"/>
</dbReference>
<dbReference type="GO" id="GO:0046872">
    <property type="term" value="F:metal ion binding"/>
    <property type="evidence" value="ECO:0007669"/>
    <property type="project" value="UniProtKB-KW"/>
</dbReference>
<dbReference type="GO" id="GO:0022900">
    <property type="term" value="P:electron transport chain"/>
    <property type="evidence" value="ECO:0007669"/>
    <property type="project" value="UniProtKB-UniRule"/>
</dbReference>
<dbReference type="FunFam" id="1.10.15.40:FF:000001">
    <property type="entry name" value="Ion-translocating oxidoreductase complex subunit B"/>
    <property type="match status" value="1"/>
</dbReference>
<dbReference type="Gene3D" id="3.30.70.20">
    <property type="match status" value="1"/>
</dbReference>
<dbReference type="Gene3D" id="1.10.15.40">
    <property type="entry name" value="Electron transport complex subunit B, putative Fe-S cluster"/>
    <property type="match status" value="1"/>
</dbReference>
<dbReference type="HAMAP" id="MF_00463">
    <property type="entry name" value="RsxB_RnfB"/>
    <property type="match status" value="1"/>
</dbReference>
<dbReference type="InterPro" id="IPR007202">
    <property type="entry name" value="4Fe-4S_dom"/>
</dbReference>
<dbReference type="InterPro" id="IPR017896">
    <property type="entry name" value="4Fe4S_Fe-S-bd"/>
</dbReference>
<dbReference type="InterPro" id="IPR017900">
    <property type="entry name" value="4Fe4S_Fe_S_CS"/>
</dbReference>
<dbReference type="InterPro" id="IPR050395">
    <property type="entry name" value="4Fe4S_Ferredoxin_RnfB"/>
</dbReference>
<dbReference type="InterPro" id="IPR010207">
    <property type="entry name" value="Elect_transpt_cplx_RnfB/RsxB"/>
</dbReference>
<dbReference type="InterPro" id="IPR016463">
    <property type="entry name" value="RnfB/RsxB_Proteobac"/>
</dbReference>
<dbReference type="NCBIfam" id="NF003475">
    <property type="entry name" value="PRK05113.1"/>
    <property type="match status" value="1"/>
</dbReference>
<dbReference type="NCBIfam" id="TIGR01944">
    <property type="entry name" value="rnfB"/>
    <property type="match status" value="1"/>
</dbReference>
<dbReference type="PANTHER" id="PTHR43560">
    <property type="entry name" value="ION-TRANSLOCATING OXIDOREDUCTASE COMPLEX SUBUNIT B"/>
    <property type="match status" value="1"/>
</dbReference>
<dbReference type="PANTHER" id="PTHR43560:SF1">
    <property type="entry name" value="ION-TRANSLOCATING OXIDOREDUCTASE COMPLEX SUBUNIT B"/>
    <property type="match status" value="1"/>
</dbReference>
<dbReference type="Pfam" id="PF14697">
    <property type="entry name" value="Fer4_21"/>
    <property type="match status" value="1"/>
</dbReference>
<dbReference type="Pfam" id="PF04060">
    <property type="entry name" value="FeS"/>
    <property type="match status" value="1"/>
</dbReference>
<dbReference type="PIRSF" id="PIRSF005784">
    <property type="entry name" value="Elect_transpt_RnfB"/>
    <property type="match status" value="1"/>
</dbReference>
<dbReference type="SUPFAM" id="SSF54862">
    <property type="entry name" value="4Fe-4S ferredoxins"/>
    <property type="match status" value="1"/>
</dbReference>
<dbReference type="PROSITE" id="PS51656">
    <property type="entry name" value="4FE4S"/>
    <property type="match status" value="1"/>
</dbReference>
<dbReference type="PROSITE" id="PS00198">
    <property type="entry name" value="4FE4S_FER_1"/>
    <property type="match status" value="2"/>
</dbReference>
<dbReference type="PROSITE" id="PS51379">
    <property type="entry name" value="4FE4S_FER_2"/>
    <property type="match status" value="2"/>
</dbReference>
<proteinExistence type="inferred from homology"/>
<accession>A7ZM88</accession>
<feature type="chain" id="PRO_1000060346" description="Ion-translocating oxidoreductase complex subunit B">
    <location>
        <begin position="1"/>
        <end position="192"/>
    </location>
</feature>
<feature type="domain" description="4Fe-4S" evidence="1">
    <location>
        <begin position="32"/>
        <end position="91"/>
    </location>
</feature>
<feature type="domain" description="4Fe-4S ferredoxin-type 1" evidence="1">
    <location>
        <begin position="108"/>
        <end position="137"/>
    </location>
</feature>
<feature type="domain" description="4Fe-4S ferredoxin-type 2" evidence="1">
    <location>
        <begin position="138"/>
        <end position="167"/>
    </location>
</feature>
<feature type="region of interest" description="Hydrophobic" evidence="1">
    <location>
        <begin position="1"/>
        <end position="26"/>
    </location>
</feature>
<feature type="binding site" evidence="1">
    <location>
        <position position="49"/>
    </location>
    <ligand>
        <name>[4Fe-4S] cluster</name>
        <dbReference type="ChEBI" id="CHEBI:49883"/>
        <label>1</label>
    </ligand>
</feature>
<feature type="binding site" evidence="1">
    <location>
        <position position="52"/>
    </location>
    <ligand>
        <name>[4Fe-4S] cluster</name>
        <dbReference type="ChEBI" id="CHEBI:49883"/>
        <label>1</label>
    </ligand>
</feature>
<feature type="binding site" evidence="1">
    <location>
        <position position="57"/>
    </location>
    <ligand>
        <name>[4Fe-4S] cluster</name>
        <dbReference type="ChEBI" id="CHEBI:49883"/>
        <label>1</label>
    </ligand>
</feature>
<feature type="binding site" evidence="1">
    <location>
        <position position="74"/>
    </location>
    <ligand>
        <name>[4Fe-4S] cluster</name>
        <dbReference type="ChEBI" id="CHEBI:49883"/>
        <label>1</label>
    </ligand>
</feature>
<feature type="binding site" evidence="1">
    <location>
        <position position="117"/>
    </location>
    <ligand>
        <name>[4Fe-4S] cluster</name>
        <dbReference type="ChEBI" id="CHEBI:49883"/>
        <label>2</label>
    </ligand>
</feature>
<feature type="binding site" evidence="1">
    <location>
        <position position="120"/>
    </location>
    <ligand>
        <name>[4Fe-4S] cluster</name>
        <dbReference type="ChEBI" id="CHEBI:49883"/>
        <label>2</label>
    </ligand>
</feature>
<feature type="binding site" evidence="1">
    <location>
        <position position="123"/>
    </location>
    <ligand>
        <name>[4Fe-4S] cluster</name>
        <dbReference type="ChEBI" id="CHEBI:49883"/>
        <label>2</label>
    </ligand>
</feature>
<feature type="binding site" evidence="1">
    <location>
        <position position="127"/>
    </location>
    <ligand>
        <name>[4Fe-4S] cluster</name>
        <dbReference type="ChEBI" id="CHEBI:49883"/>
        <label>3</label>
    </ligand>
</feature>
<feature type="binding site" evidence="1">
    <location>
        <position position="147"/>
    </location>
    <ligand>
        <name>[4Fe-4S] cluster</name>
        <dbReference type="ChEBI" id="CHEBI:49883"/>
        <label>3</label>
    </ligand>
</feature>
<feature type="binding site" evidence="1">
    <location>
        <position position="150"/>
    </location>
    <ligand>
        <name>[4Fe-4S] cluster</name>
        <dbReference type="ChEBI" id="CHEBI:49883"/>
        <label>3</label>
    </ligand>
</feature>
<feature type="binding site" evidence="1">
    <location>
        <position position="153"/>
    </location>
    <ligand>
        <name>[4Fe-4S] cluster</name>
        <dbReference type="ChEBI" id="CHEBI:49883"/>
        <label>3</label>
    </ligand>
</feature>
<feature type="binding site" evidence="1">
    <location>
        <position position="157"/>
    </location>
    <ligand>
        <name>[4Fe-4S] cluster</name>
        <dbReference type="ChEBI" id="CHEBI:49883"/>
        <label>2</label>
    </ligand>
</feature>